<reference key="1">
    <citation type="journal article" date="2006" name="BMC Genomics">
        <title>Comparative genome analysis: selection pressure on the Borrelia vls cassettes is essential for infectivity.</title>
        <authorList>
            <person name="Gloeckner G."/>
            <person name="Schulte-Spechtel U."/>
            <person name="Schilhabel M."/>
            <person name="Felder M."/>
            <person name="Suehnel J."/>
            <person name="Wilske B."/>
            <person name="Platzer M."/>
        </authorList>
    </citation>
    <scope>NUCLEOTIDE SEQUENCE [LARGE SCALE GENOMIC DNA]</scope>
    <source>
        <strain>PKo</strain>
    </source>
</reference>
<reference key="2">
    <citation type="journal article" date="2011" name="J. Bacteriol.">
        <title>Whole-genome sequences of two Borrelia afzelii and two Borrelia garinii Lyme disease agent isolates.</title>
        <authorList>
            <person name="Casjens S.R."/>
            <person name="Mongodin E.F."/>
            <person name="Qiu W.G."/>
            <person name="Dunn J.J."/>
            <person name="Luft B.J."/>
            <person name="Fraser-Liggett C.M."/>
            <person name="Schutzer S.E."/>
        </authorList>
    </citation>
    <scope>NUCLEOTIDE SEQUENCE [LARGE SCALE GENOMIC DNA]</scope>
    <source>
        <strain>PKo</strain>
    </source>
</reference>
<feature type="chain" id="PRO_0000265000" description="Putative 3-methyladenine DNA glycosylase">
    <location>
        <begin position="1"/>
        <end position="186"/>
    </location>
</feature>
<accession>Q0SN86</accession>
<accession>G0IS67</accession>
<name>3MGH_BORAP</name>
<gene>
    <name type="ordered locus">BAPKO_0442</name>
    <name type="ordered locus">BafPKo_0432</name>
</gene>
<comment type="similarity">
    <text evidence="1">Belongs to the DNA glycosylase MPG family.</text>
</comment>
<dbReference type="EC" id="3.2.2.-" evidence="1"/>
<dbReference type="EMBL" id="CP000395">
    <property type="protein sequence ID" value="ABH01692.1"/>
    <property type="molecule type" value="Genomic_DNA"/>
</dbReference>
<dbReference type="EMBL" id="CP002933">
    <property type="protein sequence ID" value="AEL69648.1"/>
    <property type="molecule type" value="Genomic_DNA"/>
</dbReference>
<dbReference type="RefSeq" id="WP_011601017.1">
    <property type="nucleotide sequence ID" value="NZ_CP160066.1"/>
</dbReference>
<dbReference type="SMR" id="Q0SN86"/>
<dbReference type="STRING" id="29518.BLA32_02170"/>
<dbReference type="KEGG" id="baf:BAPKO_0442"/>
<dbReference type="KEGG" id="bafz:BafPKo_0432"/>
<dbReference type="PATRIC" id="fig|390236.22.peg.421"/>
<dbReference type="eggNOG" id="COG2094">
    <property type="taxonomic scope" value="Bacteria"/>
</dbReference>
<dbReference type="HOGENOM" id="CLU_060471_0_2_12"/>
<dbReference type="OrthoDB" id="9794313at2"/>
<dbReference type="Proteomes" id="UP000005216">
    <property type="component" value="Chromosome"/>
</dbReference>
<dbReference type="GO" id="GO:0003905">
    <property type="term" value="F:alkylbase DNA N-glycosylase activity"/>
    <property type="evidence" value="ECO:0007669"/>
    <property type="project" value="InterPro"/>
</dbReference>
<dbReference type="GO" id="GO:0003677">
    <property type="term" value="F:DNA binding"/>
    <property type="evidence" value="ECO:0007669"/>
    <property type="project" value="InterPro"/>
</dbReference>
<dbReference type="GO" id="GO:0006284">
    <property type="term" value="P:base-excision repair"/>
    <property type="evidence" value="ECO:0007669"/>
    <property type="project" value="InterPro"/>
</dbReference>
<dbReference type="CDD" id="cd00540">
    <property type="entry name" value="AAG"/>
    <property type="match status" value="1"/>
</dbReference>
<dbReference type="FunFam" id="3.10.300.10:FF:000001">
    <property type="entry name" value="Putative 3-methyladenine DNA glycosylase"/>
    <property type="match status" value="1"/>
</dbReference>
<dbReference type="Gene3D" id="3.10.300.10">
    <property type="entry name" value="Methylpurine-DNA glycosylase (MPG)"/>
    <property type="match status" value="1"/>
</dbReference>
<dbReference type="HAMAP" id="MF_00527">
    <property type="entry name" value="3MGH"/>
    <property type="match status" value="1"/>
</dbReference>
<dbReference type="InterPro" id="IPR011034">
    <property type="entry name" value="Formyl_transferase-like_C_sf"/>
</dbReference>
<dbReference type="InterPro" id="IPR003180">
    <property type="entry name" value="MPG"/>
</dbReference>
<dbReference type="InterPro" id="IPR036995">
    <property type="entry name" value="MPG_sf"/>
</dbReference>
<dbReference type="NCBIfam" id="TIGR00567">
    <property type="entry name" value="3mg"/>
    <property type="match status" value="1"/>
</dbReference>
<dbReference type="PANTHER" id="PTHR10429">
    <property type="entry name" value="DNA-3-METHYLADENINE GLYCOSYLASE"/>
    <property type="match status" value="1"/>
</dbReference>
<dbReference type="PANTHER" id="PTHR10429:SF0">
    <property type="entry name" value="DNA-3-METHYLADENINE GLYCOSYLASE"/>
    <property type="match status" value="1"/>
</dbReference>
<dbReference type="Pfam" id="PF02245">
    <property type="entry name" value="Pur_DNA_glyco"/>
    <property type="match status" value="1"/>
</dbReference>
<dbReference type="SUPFAM" id="SSF50486">
    <property type="entry name" value="FMT C-terminal domain-like"/>
    <property type="match status" value="1"/>
</dbReference>
<sequence>MDRYFFLQDASTVAKLLLGNLLIRKIDKKEIVVRIVETEAYMGITDSACHSYSGKRTNRTNAMYNIGGYSYVYIIYGMHHMFNIVTADKNNPQAVLIRSVEPVSPLLGEKCVLTNGPGKLTKFLNIDLAFNKVDLIGNNELFLQRGLNLDFNIVCSKRININYAQEDDINKLWRFYIEGNKFVSRC</sequence>
<protein>
    <recommendedName>
        <fullName evidence="1">Putative 3-methyladenine DNA glycosylase</fullName>
        <ecNumber evidence="1">3.2.2.-</ecNumber>
    </recommendedName>
</protein>
<organism>
    <name type="scientific">Borreliella afzelii (strain PKo)</name>
    <name type="common">Borrelia afzelii</name>
    <dbReference type="NCBI Taxonomy" id="390236"/>
    <lineage>
        <taxon>Bacteria</taxon>
        <taxon>Pseudomonadati</taxon>
        <taxon>Spirochaetota</taxon>
        <taxon>Spirochaetia</taxon>
        <taxon>Spirochaetales</taxon>
        <taxon>Borreliaceae</taxon>
        <taxon>Borreliella</taxon>
    </lineage>
</organism>
<evidence type="ECO:0000255" key="1">
    <source>
        <dbReference type="HAMAP-Rule" id="MF_00527"/>
    </source>
</evidence>
<proteinExistence type="inferred from homology"/>
<keyword id="KW-0227">DNA damage</keyword>
<keyword id="KW-0234">DNA repair</keyword>
<keyword id="KW-0378">Hydrolase</keyword>